<evidence type="ECO:0000255" key="1">
    <source>
        <dbReference type="HAMAP-Rule" id="MF_01367"/>
    </source>
</evidence>
<evidence type="ECO:0000305" key="2"/>
<proteinExistence type="inferred from homology"/>
<gene>
    <name evidence="1" type="primary">rpl14</name>
</gene>
<dbReference type="EMBL" id="AP009377">
    <property type="protein sequence ID" value="BAG16643.1"/>
    <property type="molecule type" value="Genomic_DNA"/>
</dbReference>
<dbReference type="RefSeq" id="YP_001806645.1">
    <property type="nucleotide sequence ID" value="NC_010548.1"/>
</dbReference>
<dbReference type="SMR" id="B1VKD2"/>
<dbReference type="GeneID" id="6166542"/>
<dbReference type="KEGG" id="cjf:6166542"/>
<dbReference type="OrthoDB" id="274765at2759"/>
<dbReference type="GO" id="GO:0009507">
    <property type="term" value="C:chloroplast"/>
    <property type="evidence" value="ECO:0007669"/>
    <property type="project" value="UniProtKB-SubCell"/>
</dbReference>
<dbReference type="GO" id="GO:0022625">
    <property type="term" value="C:cytosolic large ribosomal subunit"/>
    <property type="evidence" value="ECO:0007669"/>
    <property type="project" value="TreeGrafter"/>
</dbReference>
<dbReference type="GO" id="GO:0070180">
    <property type="term" value="F:large ribosomal subunit rRNA binding"/>
    <property type="evidence" value="ECO:0007669"/>
    <property type="project" value="TreeGrafter"/>
</dbReference>
<dbReference type="GO" id="GO:0003735">
    <property type="term" value="F:structural constituent of ribosome"/>
    <property type="evidence" value="ECO:0007669"/>
    <property type="project" value="InterPro"/>
</dbReference>
<dbReference type="GO" id="GO:0006412">
    <property type="term" value="P:translation"/>
    <property type="evidence" value="ECO:0007669"/>
    <property type="project" value="UniProtKB-UniRule"/>
</dbReference>
<dbReference type="CDD" id="cd00337">
    <property type="entry name" value="Ribosomal_uL14"/>
    <property type="match status" value="1"/>
</dbReference>
<dbReference type="FunFam" id="2.40.150.20:FF:000002">
    <property type="entry name" value="50S ribosomal protein L14, chloroplastic"/>
    <property type="match status" value="1"/>
</dbReference>
<dbReference type="Gene3D" id="2.40.150.20">
    <property type="entry name" value="Ribosomal protein L14"/>
    <property type="match status" value="1"/>
</dbReference>
<dbReference type="HAMAP" id="MF_01367">
    <property type="entry name" value="Ribosomal_uL14"/>
    <property type="match status" value="1"/>
</dbReference>
<dbReference type="InterPro" id="IPR000218">
    <property type="entry name" value="Ribosomal_uL14"/>
</dbReference>
<dbReference type="InterPro" id="IPR005745">
    <property type="entry name" value="Ribosomal_uL14_bac-type"/>
</dbReference>
<dbReference type="InterPro" id="IPR036853">
    <property type="entry name" value="Ribosomal_uL14_sf"/>
</dbReference>
<dbReference type="NCBIfam" id="TIGR01067">
    <property type="entry name" value="rplN_bact"/>
    <property type="match status" value="1"/>
</dbReference>
<dbReference type="PANTHER" id="PTHR11761">
    <property type="entry name" value="50S/60S RIBOSOMAL PROTEIN L14/L23"/>
    <property type="match status" value="1"/>
</dbReference>
<dbReference type="PANTHER" id="PTHR11761:SF3">
    <property type="entry name" value="LARGE RIBOSOMAL SUBUNIT PROTEIN UL14M"/>
    <property type="match status" value="1"/>
</dbReference>
<dbReference type="Pfam" id="PF00238">
    <property type="entry name" value="Ribosomal_L14"/>
    <property type="match status" value="1"/>
</dbReference>
<dbReference type="SMART" id="SM01374">
    <property type="entry name" value="Ribosomal_L14"/>
    <property type="match status" value="1"/>
</dbReference>
<dbReference type="SUPFAM" id="SSF50193">
    <property type="entry name" value="Ribosomal protein L14"/>
    <property type="match status" value="1"/>
</dbReference>
<comment type="function">
    <text evidence="1">Binds to 23S rRNA.</text>
</comment>
<comment type="subunit">
    <text evidence="1">Part of the 50S ribosomal subunit.</text>
</comment>
<comment type="subcellular location">
    <subcellularLocation>
        <location>Plastid</location>
        <location>Chloroplast</location>
    </subcellularLocation>
</comment>
<comment type="similarity">
    <text evidence="1">Belongs to the universal ribosomal protein uL14 family.</text>
</comment>
<keyword id="KW-0150">Chloroplast</keyword>
<keyword id="KW-0934">Plastid</keyword>
<keyword id="KW-0687">Ribonucleoprotein</keyword>
<keyword id="KW-0689">Ribosomal protein</keyword>
<keyword id="KW-0694">RNA-binding</keyword>
<keyword id="KW-0699">rRNA-binding</keyword>
<geneLocation type="chloroplast"/>
<reference key="1">
    <citation type="journal article" date="2008" name="BMC Plant Biol.">
        <title>Complete nucleotide sequence of the Cryptomeria japonica D. Don. chloroplast genome and comparative chloroplast genomics: diversified genomic structure of coniferous species.</title>
        <authorList>
            <person name="Hirao T."/>
            <person name="Watanabe A."/>
            <person name="Kurita M."/>
            <person name="Kondo T."/>
            <person name="Takata K."/>
        </authorList>
    </citation>
    <scope>NUCLEOTIDE SEQUENCE [LARGE SCALE GENOMIC DNA]</scope>
</reference>
<accession>B1VKD2</accession>
<sequence length="122" mass="13337">MIQSQTYLNVADNSGARKLMCIRVLGAGNRNTANIGDIIIAIIKEAAPNMPLEESEVVRAVVIRTCKELKRSDGMIIRSDDNAAVVIDQKGNPRGTRVFGSVTEELRELNFTKIISLAPEVL</sequence>
<protein>
    <recommendedName>
        <fullName evidence="1">Large ribosomal subunit protein uL14c</fullName>
    </recommendedName>
    <alternativeName>
        <fullName evidence="2">50S ribosomal protein L14, chloroplastic</fullName>
    </alternativeName>
</protein>
<name>RK14_CRYJA</name>
<feature type="chain" id="PRO_0000355871" description="Large ribosomal subunit protein uL14c">
    <location>
        <begin position="1"/>
        <end position="122"/>
    </location>
</feature>
<organism>
    <name type="scientific">Cryptomeria japonica</name>
    <name type="common">Japanese cedar</name>
    <name type="synonym">Cupressus japonica</name>
    <dbReference type="NCBI Taxonomy" id="3369"/>
    <lineage>
        <taxon>Eukaryota</taxon>
        <taxon>Viridiplantae</taxon>
        <taxon>Streptophyta</taxon>
        <taxon>Embryophyta</taxon>
        <taxon>Tracheophyta</taxon>
        <taxon>Spermatophyta</taxon>
        <taxon>Pinopsida</taxon>
        <taxon>Pinidae</taxon>
        <taxon>Conifers II</taxon>
        <taxon>Cupressales</taxon>
        <taxon>Cupressaceae</taxon>
        <taxon>Cryptomeria</taxon>
    </lineage>
</organism>